<evidence type="ECO:0000250" key="1"/>
<evidence type="ECO:0000250" key="2">
    <source>
        <dbReference type="UniProtKB" id="Q61122"/>
    </source>
</evidence>
<evidence type="ECO:0000256" key="3">
    <source>
        <dbReference type="SAM" id="MobiDB-lite"/>
    </source>
</evidence>
<evidence type="ECO:0000269" key="4">
    <source>
    </source>
</evidence>
<evidence type="ECO:0000303" key="5">
    <source ref="2"/>
</evidence>
<evidence type="ECO:0000305" key="6"/>
<evidence type="ECO:0007744" key="7">
    <source>
    </source>
</evidence>
<evidence type="ECO:0007744" key="8">
    <source>
    </source>
</evidence>
<evidence type="ECO:0007744" key="9">
    <source>
    </source>
</evidence>
<evidence type="ECO:0007744" key="10">
    <source>
    </source>
</evidence>
<evidence type="ECO:0007744" key="11">
    <source>
    </source>
</evidence>
<evidence type="ECO:0007829" key="12">
    <source>
        <dbReference type="PDB" id="2YUF"/>
    </source>
</evidence>
<sequence length="487" mass="54401">MAAALPRTLGELQLYRILQKANLLSYFDAFIQQGGDDVQQLCEAGEEEFLEIMALVGMASKPLHVRRLQKALRDWVTNPGLFNQPLTSLPVSSIPIYKLPEGSPTWLGISCSSYERSSNAREPHLKIPKCAATTCVQSLGQGKSDVVGSLALQSVGESRLWQGHHATESEHSLSPADLGSPASPKESSEALDAAAALSVAECVERMAPTLPKSDLNEVKELLKTNKKLAKMIGHIFEMNDDDPHKEEEIRKYSAIYGRFDSKRKDGKHLTLHELTVNEAAAQLCVKDNALLTRRDELFALARQISREVTYKYTYRTTKSKCGERDELSPKRIKVEDGFPDFQDSVQTLFQQARAKSEELAALSSQQPEKVMAKQMEFLCNQAGYERLQHAERRLSAGLYRQSSEEHSPNGLTSDNSDGQGERPLNLRMPNLQNRQPHHFVVDGELSRLYPSEAKSHSSESLGILKDYPHSAFTLEKKVIKTEPEDSR</sequence>
<gene>
    <name type="primary">NAB1</name>
</gene>
<proteinExistence type="evidence at protein level"/>
<reference key="1">
    <citation type="journal article" date="1996" name="Mol. Cell. Biol.">
        <title>NAB2, a corepressor of NGFI-A (Egr-1) and Krox20, is induced by proliferative and differentiative stimuli.</title>
        <authorList>
            <person name="Svaren J."/>
            <person name="Sevetson B.R."/>
            <person name="Apel E.D."/>
            <person name="Zimonjic D.B."/>
            <person name="Popescu N.C."/>
            <person name="Milbrandt J."/>
        </authorList>
    </citation>
    <scope>NUCLEOTIDE SEQUENCE [MRNA] (ISOFORM LONG)</scope>
    <source>
        <tissue>Brain</tissue>
    </source>
</reference>
<reference key="2">
    <citation type="submission" date="1998-01" db="EMBL/GenBank/DDBJ databases">
        <authorList>
            <person name="Fan W."/>
        </authorList>
    </citation>
    <scope>NUCLEOTIDE SEQUENCE [MRNA] (ISOFORMS LONG AND SHORT)</scope>
</reference>
<reference key="3">
    <citation type="journal article" date="2005" name="Nature">
        <title>Generation and annotation of the DNA sequences of human chromosomes 2 and 4.</title>
        <authorList>
            <person name="Hillier L.W."/>
            <person name="Graves T.A."/>
            <person name="Fulton R.S."/>
            <person name="Fulton L.A."/>
            <person name="Pepin K.H."/>
            <person name="Minx P."/>
            <person name="Wagner-McPherson C."/>
            <person name="Layman D."/>
            <person name="Wylie K."/>
            <person name="Sekhon M."/>
            <person name="Becker M.C."/>
            <person name="Fewell G.A."/>
            <person name="Delehaunty K.D."/>
            <person name="Miner T.L."/>
            <person name="Nash W.E."/>
            <person name="Kremitzki C."/>
            <person name="Oddy L."/>
            <person name="Du H."/>
            <person name="Sun H."/>
            <person name="Bradshaw-Cordum H."/>
            <person name="Ali J."/>
            <person name="Carter J."/>
            <person name="Cordes M."/>
            <person name="Harris A."/>
            <person name="Isak A."/>
            <person name="van Brunt A."/>
            <person name="Nguyen C."/>
            <person name="Du F."/>
            <person name="Courtney L."/>
            <person name="Kalicki J."/>
            <person name="Ozersky P."/>
            <person name="Abbott S."/>
            <person name="Armstrong J."/>
            <person name="Belter E.A."/>
            <person name="Caruso L."/>
            <person name="Cedroni M."/>
            <person name="Cotton M."/>
            <person name="Davidson T."/>
            <person name="Desai A."/>
            <person name="Elliott G."/>
            <person name="Erb T."/>
            <person name="Fronick C."/>
            <person name="Gaige T."/>
            <person name="Haakenson W."/>
            <person name="Haglund K."/>
            <person name="Holmes A."/>
            <person name="Harkins R."/>
            <person name="Kim K."/>
            <person name="Kruchowski S.S."/>
            <person name="Strong C.M."/>
            <person name="Grewal N."/>
            <person name="Goyea E."/>
            <person name="Hou S."/>
            <person name="Levy A."/>
            <person name="Martinka S."/>
            <person name="Mead K."/>
            <person name="McLellan M.D."/>
            <person name="Meyer R."/>
            <person name="Randall-Maher J."/>
            <person name="Tomlinson C."/>
            <person name="Dauphin-Kohlberg S."/>
            <person name="Kozlowicz-Reilly A."/>
            <person name="Shah N."/>
            <person name="Swearengen-Shahid S."/>
            <person name="Snider J."/>
            <person name="Strong J.T."/>
            <person name="Thompson J."/>
            <person name="Yoakum M."/>
            <person name="Leonard S."/>
            <person name="Pearman C."/>
            <person name="Trani L."/>
            <person name="Radionenko M."/>
            <person name="Waligorski J.E."/>
            <person name="Wang C."/>
            <person name="Rock S.M."/>
            <person name="Tin-Wollam A.-M."/>
            <person name="Maupin R."/>
            <person name="Latreille P."/>
            <person name="Wendl M.C."/>
            <person name="Yang S.-P."/>
            <person name="Pohl C."/>
            <person name="Wallis J.W."/>
            <person name="Spieth J."/>
            <person name="Bieri T.A."/>
            <person name="Berkowicz N."/>
            <person name="Nelson J.O."/>
            <person name="Osborne J."/>
            <person name="Ding L."/>
            <person name="Meyer R."/>
            <person name="Sabo A."/>
            <person name="Shotland Y."/>
            <person name="Sinha P."/>
            <person name="Wohldmann P.E."/>
            <person name="Cook L.L."/>
            <person name="Hickenbotham M.T."/>
            <person name="Eldred J."/>
            <person name="Williams D."/>
            <person name="Jones T.A."/>
            <person name="She X."/>
            <person name="Ciccarelli F.D."/>
            <person name="Izaurralde E."/>
            <person name="Taylor J."/>
            <person name="Schmutz J."/>
            <person name="Myers R.M."/>
            <person name="Cox D.R."/>
            <person name="Huang X."/>
            <person name="McPherson J.D."/>
            <person name="Mardis E.R."/>
            <person name="Clifton S.W."/>
            <person name="Warren W.C."/>
            <person name="Chinwalla A.T."/>
            <person name="Eddy S.R."/>
            <person name="Marra M.A."/>
            <person name="Ovcharenko I."/>
            <person name="Furey T.S."/>
            <person name="Miller W."/>
            <person name="Eichler E.E."/>
            <person name="Bork P."/>
            <person name="Suyama M."/>
            <person name="Torrents D."/>
            <person name="Waterston R.H."/>
            <person name="Wilson R.K."/>
        </authorList>
    </citation>
    <scope>NUCLEOTIDE SEQUENCE [LARGE SCALE GENOMIC DNA]</scope>
</reference>
<reference key="4">
    <citation type="journal article" date="2004" name="Genome Res.">
        <title>The status, quality, and expansion of the NIH full-length cDNA project: the Mammalian Gene Collection (MGC).</title>
        <authorList>
            <consortium name="The MGC Project Team"/>
        </authorList>
    </citation>
    <scope>NUCLEOTIDE SEQUENCE [LARGE SCALE MRNA]</scope>
    <source>
        <tissue>Ovary</tissue>
    </source>
</reference>
<reference key="5">
    <citation type="submission" date="1998-03" db="EMBL/GenBank/DDBJ databases">
        <title>Cloning and characterization of the 5' promoter region of human p54, a transcriptional repressor.</title>
        <authorList>
            <person name="Cao J."/>
            <person name="Fan W."/>
        </authorList>
    </citation>
    <scope>NUCLEOTIDE SEQUENCE [GENOMIC DNA] OF 1-103</scope>
</reference>
<reference key="6">
    <citation type="journal article" date="2006" name="Cell">
        <title>Global, in vivo, and site-specific phosphorylation dynamics in signaling networks.</title>
        <authorList>
            <person name="Olsen J.V."/>
            <person name="Blagoev B."/>
            <person name="Gnad F."/>
            <person name="Macek B."/>
            <person name="Kumar C."/>
            <person name="Mortensen P."/>
            <person name="Mann M."/>
        </authorList>
    </citation>
    <scope>PHOSPHORYLATION [LARGE SCALE ANALYSIS] AT SER-328</scope>
    <scope>IDENTIFICATION BY MASS SPECTROMETRY [LARGE SCALE ANALYSIS]</scope>
    <source>
        <tissue>Cervix carcinoma</tissue>
    </source>
</reference>
<reference key="7">
    <citation type="journal article" date="2011" name="EMBO Rep.">
        <title>The transcription factor Krox20 is an E3 ligase that sumoylates its Nab coregulators.</title>
        <authorList>
            <person name="Garcia-Gutierrez P."/>
            <person name="Juarez-Vicente F."/>
            <person name="Gallardo-Chamizo F."/>
            <person name="Charnay P."/>
            <person name="Garcia-Dominguez M."/>
        </authorList>
    </citation>
    <scope>SUMOYLATION AT LYS-333 AND LYS-480 BY EGR2</scope>
</reference>
<reference key="8">
    <citation type="journal article" date="2011" name="Sci. Signal.">
        <title>System-wide temporal characterization of the proteome and phosphoproteome of human embryonic stem cell differentiation.</title>
        <authorList>
            <person name="Rigbolt K.T."/>
            <person name="Prokhorova T.A."/>
            <person name="Akimov V."/>
            <person name="Henningsen J."/>
            <person name="Johansen P.T."/>
            <person name="Kratchmarova I."/>
            <person name="Kassem M."/>
            <person name="Mann M."/>
            <person name="Olsen J.V."/>
            <person name="Blagoev B."/>
        </authorList>
    </citation>
    <scope>IDENTIFICATION BY MASS SPECTROMETRY [LARGE SCALE ANALYSIS]</scope>
</reference>
<reference key="9">
    <citation type="journal article" date="2013" name="J. Proteome Res.">
        <title>Toward a comprehensive characterization of a human cancer cell phosphoproteome.</title>
        <authorList>
            <person name="Zhou H."/>
            <person name="Di Palma S."/>
            <person name="Preisinger C."/>
            <person name="Peng M."/>
            <person name="Polat A.N."/>
            <person name="Heck A.J."/>
            <person name="Mohammed S."/>
        </authorList>
    </citation>
    <scope>IDENTIFICATION BY MASS SPECTROMETRY [LARGE SCALE ANALYSIS]</scope>
    <source>
        <tissue>Cervix carcinoma</tissue>
        <tissue>Erythroleukemia</tissue>
    </source>
</reference>
<reference key="10">
    <citation type="journal article" date="2014" name="J. Proteomics">
        <title>An enzyme assisted RP-RPLC approach for in-depth analysis of human liver phosphoproteome.</title>
        <authorList>
            <person name="Bian Y."/>
            <person name="Song C."/>
            <person name="Cheng K."/>
            <person name="Dong M."/>
            <person name="Wang F."/>
            <person name="Huang J."/>
            <person name="Sun D."/>
            <person name="Wang L."/>
            <person name="Ye M."/>
            <person name="Zou H."/>
        </authorList>
    </citation>
    <scope>IDENTIFICATION BY MASS SPECTROMETRY [LARGE SCALE ANALYSIS]</scope>
    <source>
        <tissue>Liver</tissue>
    </source>
</reference>
<reference key="11">
    <citation type="journal article" date="2014" name="Nat. Struct. Mol. Biol.">
        <title>Uncovering global SUMOylation signaling networks in a site-specific manner.</title>
        <authorList>
            <person name="Hendriks I.A."/>
            <person name="D'Souza R.C."/>
            <person name="Yang B."/>
            <person name="Verlaan-de Vries M."/>
            <person name="Mann M."/>
            <person name="Vertegaal A.C."/>
        </authorList>
    </citation>
    <scope>SUMOYLATION [LARGE SCALE ANALYSIS] AT LYS-333; LYS-355 AND LYS-480</scope>
    <scope>IDENTIFICATION BY MASS SPECTROMETRY [LARGE SCALE ANALYSIS]</scope>
</reference>
<reference key="12">
    <citation type="journal article" date="2015" name="Cell Rep.">
        <title>SUMO-2 orchestrates chromatin modifiers in response to DNA damage.</title>
        <authorList>
            <person name="Hendriks I.A."/>
            <person name="Treffers L.W."/>
            <person name="Verlaan-de Vries M."/>
            <person name="Olsen J.V."/>
            <person name="Vertegaal A.C."/>
        </authorList>
    </citation>
    <scope>SUMOYLATION [LARGE SCALE ANALYSIS] AT LYS-129; LYS-333 AND LYS-480</scope>
    <scope>IDENTIFICATION BY MASS SPECTROMETRY [LARGE SCALE ANALYSIS]</scope>
</reference>
<reference key="13">
    <citation type="journal article" date="2015" name="Mol. Cell. Proteomics">
        <title>System-wide analysis of SUMOylation dynamics in response to replication stress reveals novel small ubiquitin-like modified target proteins and acceptor lysines relevant for genome stability.</title>
        <authorList>
            <person name="Xiao Z."/>
            <person name="Chang J.G."/>
            <person name="Hendriks I.A."/>
            <person name="Sigurdsson J.O."/>
            <person name="Olsen J.V."/>
            <person name="Vertegaal A.C."/>
        </authorList>
    </citation>
    <scope>SUMOYLATION [LARGE SCALE ANALYSIS] AT LYS-333</scope>
    <scope>IDENTIFICATION BY MASS SPECTROMETRY [LARGE SCALE ANALYSIS]</scope>
</reference>
<reference key="14">
    <citation type="journal article" date="2017" name="Nat. Struct. Mol. Biol.">
        <title>Site-specific mapping of the human SUMO proteome reveals co-modification with phosphorylation.</title>
        <authorList>
            <person name="Hendriks I.A."/>
            <person name="Lyon D."/>
            <person name="Young C."/>
            <person name="Jensen L.J."/>
            <person name="Vertegaal A.C."/>
            <person name="Nielsen M.L."/>
        </authorList>
    </citation>
    <scope>SUMOYLATION [LARGE SCALE ANALYSIS] AT LYS-126; LYS-129; LYS-143; LYS-212; LYS-333; LYS-355; LYS-369; LYS-373; LYS-454; LYS-465; LYS-477 AND LYS-480</scope>
    <scope>IDENTIFICATION BY MASS SPECTROMETRY [LARGE SCALE ANALYSIS]</scope>
</reference>
<reference key="15">
    <citation type="submission" date="2008-04" db="PDB data bank">
        <title>Solution structure of the NCD2 domain in human transcriptional repressor NAB1 protein.</title>
        <authorList>
            <consortium name="RIKEN structural genomics initiative (RSGI)"/>
        </authorList>
    </citation>
    <scope>STRUCTURE BY NMR OF 183-317</scope>
</reference>
<name>NAB1_HUMAN</name>
<accession>Q13506</accession>
<accession>O75383</accession>
<accession>O75384</accession>
<accession>Q6GTU1</accession>
<accession>Q9UEV1</accession>
<organism>
    <name type="scientific">Homo sapiens</name>
    <name type="common">Human</name>
    <dbReference type="NCBI Taxonomy" id="9606"/>
    <lineage>
        <taxon>Eukaryota</taxon>
        <taxon>Metazoa</taxon>
        <taxon>Chordata</taxon>
        <taxon>Craniata</taxon>
        <taxon>Vertebrata</taxon>
        <taxon>Euteleostomi</taxon>
        <taxon>Mammalia</taxon>
        <taxon>Eutheria</taxon>
        <taxon>Euarchontoglires</taxon>
        <taxon>Primates</taxon>
        <taxon>Haplorrhini</taxon>
        <taxon>Catarrhini</taxon>
        <taxon>Hominidae</taxon>
        <taxon>Homo</taxon>
    </lineage>
</organism>
<keyword id="KW-0002">3D-structure</keyword>
<keyword id="KW-0025">Alternative splicing</keyword>
<keyword id="KW-1017">Isopeptide bond</keyword>
<keyword id="KW-0539">Nucleus</keyword>
<keyword id="KW-0597">Phosphoprotein</keyword>
<keyword id="KW-1267">Proteomics identification</keyword>
<keyword id="KW-1185">Reference proteome</keyword>
<keyword id="KW-0678">Repressor</keyword>
<keyword id="KW-0804">Transcription</keyword>
<keyword id="KW-0805">Transcription regulation</keyword>
<keyword id="KW-0832">Ubl conjugation</keyword>
<comment type="function">
    <text evidence="1">Acts as a transcriptional repressor for zinc finger transcription factors EGR1 and EGR2.</text>
</comment>
<comment type="subunit">
    <text evidence="1">Homomultimers may associate with EGR1 bound to DNA.</text>
</comment>
<comment type="subcellular location">
    <subcellularLocation>
        <location evidence="1">Nucleus</location>
    </subcellularLocation>
</comment>
<comment type="alternative products">
    <event type="alternative splicing"/>
    <isoform>
        <id>Q13506-1</id>
        <name>Long</name>
        <sequence type="displayed"/>
    </isoform>
    <isoform>
        <id>Q13506-2</id>
        <name>Short</name>
        <sequence type="described" ref="VSP_003384"/>
    </isoform>
</comment>
<comment type="tissue specificity">
    <text>Isoform Short is found in myeloid leukemia cell line KG-1.</text>
</comment>
<comment type="domain">
    <text>The NAB conserved domain 1 (NCD1) interacts with EGR1 inhibitory domain and mediates multimerization.</text>
</comment>
<comment type="domain">
    <text>The NAB conserved domain 2 (NCD2) is necessary for transcriptional repression.</text>
</comment>
<comment type="similarity">
    <text evidence="6">Belongs to the NAB family.</text>
</comment>
<feature type="chain" id="PRO_0000077038" description="NGFI-A-binding protein 1">
    <location>
        <begin position="1"/>
        <end position="486"/>
    </location>
</feature>
<feature type="region of interest" description="NCD1">
    <location>
        <begin position="4"/>
        <end position="82"/>
    </location>
</feature>
<feature type="region of interest" description="Disordered" evidence="3">
    <location>
        <begin position="162"/>
        <end position="188"/>
    </location>
</feature>
<feature type="region of interest" description="NCD2">
    <location>
        <begin position="221"/>
        <end position="310"/>
    </location>
</feature>
<feature type="region of interest" description="Necessary for nuclear localization" evidence="1">
    <location>
        <begin position="307"/>
        <end position="338"/>
    </location>
</feature>
<feature type="region of interest" description="Disordered" evidence="3">
    <location>
        <begin position="399"/>
        <end position="434"/>
    </location>
</feature>
<feature type="compositionally biased region" description="Polar residues" evidence="3">
    <location>
        <begin position="409"/>
        <end position="418"/>
    </location>
</feature>
<feature type="modified residue" description="Phosphoserine" evidence="2">
    <location>
        <position position="172"/>
    </location>
</feature>
<feature type="modified residue" description="Phosphoserine" evidence="2">
    <location>
        <position position="183"/>
    </location>
</feature>
<feature type="modified residue" description="Phosphoserine" evidence="7">
    <location>
        <position position="328"/>
    </location>
</feature>
<feature type="modified residue" description="Phosphoserine" evidence="2">
    <location>
        <position position="407"/>
    </location>
</feature>
<feature type="cross-link" description="Glycyl lysine isopeptide (Lys-Gly) (interchain with G-Cter in SUMO2)" evidence="11">
    <location>
        <position position="126"/>
    </location>
</feature>
<feature type="cross-link" description="Glycyl lysine isopeptide (Lys-Gly) (interchain with G-Cter in SUMO2)" evidence="10 11">
    <location>
        <position position="129"/>
    </location>
</feature>
<feature type="cross-link" description="Glycyl lysine isopeptide (Lys-Gly) (interchain with G-Cter in SUMO2)" evidence="11">
    <location>
        <position position="143"/>
    </location>
</feature>
<feature type="cross-link" description="Glycyl lysine isopeptide (Lys-Gly) (interchain with G-Cter in SUMO2)" evidence="11">
    <location>
        <position position="212"/>
    </location>
</feature>
<feature type="cross-link" description="Glycyl lysine isopeptide (Lys-Gly) (interchain with G-Cter in SUMO1); alternate" evidence="4">
    <location>
        <position position="333"/>
    </location>
</feature>
<feature type="cross-link" description="Glycyl lysine isopeptide (Lys-Gly) (interchain with G-Cter in SUMO2); alternate" evidence="8 9 10 11">
    <location>
        <position position="333"/>
    </location>
</feature>
<feature type="cross-link" description="Glycyl lysine isopeptide (Lys-Gly) (interchain with G-Cter in SUMO2)" evidence="8 11">
    <location>
        <position position="355"/>
    </location>
</feature>
<feature type="cross-link" description="Glycyl lysine isopeptide (Lys-Gly) (interchain with G-Cter in SUMO2)" evidence="11">
    <location>
        <position position="369"/>
    </location>
</feature>
<feature type="cross-link" description="Glycyl lysine isopeptide (Lys-Gly) (interchain with G-Cter in SUMO2)" evidence="11">
    <location>
        <position position="373"/>
    </location>
</feature>
<feature type="cross-link" description="Glycyl lysine isopeptide (Lys-Gly) (interchain with G-Cter in SUMO2)" evidence="11">
    <location>
        <position position="454"/>
    </location>
</feature>
<feature type="cross-link" description="Glycyl lysine isopeptide (Lys-Gly) (interchain with G-Cter in SUMO2)" evidence="11">
    <location>
        <position position="465"/>
    </location>
</feature>
<feature type="cross-link" description="Glycyl lysine isopeptide (Lys-Gly) (interchain with G-Cter in SUMO2)" evidence="11">
    <location>
        <position position="477"/>
    </location>
</feature>
<feature type="cross-link" description="Glycyl lysine isopeptide (Lys-Gly) (interchain with G-Cter in SUMO1); alternate" evidence="4">
    <location>
        <position position="480"/>
    </location>
</feature>
<feature type="cross-link" description="Glycyl lysine isopeptide (Lys-Gly) (interchain with G-Cter in SUMO2); alternate" evidence="8 10 11">
    <location>
        <position position="480"/>
    </location>
</feature>
<feature type="splice variant" id="VSP_003384" description="In isoform Short." evidence="5">
    <location>
        <begin position="336"/>
        <end position="364"/>
    </location>
</feature>
<feature type="sequence conflict" description="In Ref. 1; AAC50588." evidence="6" ref="1">
    <original>K</original>
    <variation>N</variation>
    <location>
        <position position="129"/>
    </location>
</feature>
<feature type="sequence conflict" description="In Ref. 1; AAC50588." evidence="6" ref="1">
    <location>
        <position position="366"/>
    </location>
</feature>
<feature type="helix" evidence="12">
    <location>
        <begin position="193"/>
        <end position="209"/>
    </location>
</feature>
<feature type="helix" evidence="12">
    <location>
        <begin position="215"/>
        <end position="224"/>
    </location>
</feature>
<feature type="helix" evidence="12">
    <location>
        <begin position="227"/>
        <end position="232"/>
    </location>
</feature>
<feature type="helix" evidence="12">
    <location>
        <begin position="234"/>
        <end position="237"/>
    </location>
</feature>
<feature type="helix" evidence="12">
    <location>
        <begin position="243"/>
        <end position="252"/>
    </location>
</feature>
<feature type="strand" evidence="12">
    <location>
        <begin position="255"/>
        <end position="257"/>
    </location>
</feature>
<feature type="helix" evidence="12">
    <location>
        <begin position="272"/>
        <end position="286"/>
    </location>
</feature>
<feature type="helix" evidence="12">
    <location>
        <begin position="288"/>
        <end position="291"/>
    </location>
</feature>
<feature type="helix" evidence="12">
    <location>
        <begin position="294"/>
        <end position="310"/>
    </location>
</feature>
<protein>
    <recommendedName>
        <fullName>NGFI-A-binding protein 1</fullName>
    </recommendedName>
    <alternativeName>
        <fullName>EGR-1-binding protein 1</fullName>
    </alternativeName>
    <alternativeName>
        <fullName>Transcriptional regulatory protein p54</fullName>
    </alternativeName>
</protein>
<dbReference type="EMBL" id="U47007">
    <property type="protein sequence ID" value="AAC50588.1"/>
    <property type="molecule type" value="mRNA"/>
</dbReference>
<dbReference type="EMBL" id="AF045451">
    <property type="protein sequence ID" value="AAC25085.1"/>
    <property type="molecule type" value="mRNA"/>
</dbReference>
<dbReference type="EMBL" id="AF045452">
    <property type="protein sequence ID" value="AAC25086.1"/>
    <property type="molecule type" value="mRNA"/>
</dbReference>
<dbReference type="EMBL" id="AC006460">
    <property type="protein sequence ID" value="AAX93076.1"/>
    <property type="molecule type" value="Genomic_DNA"/>
</dbReference>
<dbReference type="EMBL" id="BC035724">
    <property type="protein sequence ID" value="AAH35724.1"/>
    <property type="molecule type" value="mRNA"/>
</dbReference>
<dbReference type="EMBL" id="AF052744">
    <property type="protein sequence ID" value="AAC28325.1"/>
    <property type="molecule type" value="Genomic_DNA"/>
</dbReference>
<dbReference type="CCDS" id="CCDS2307.1">
    <molecule id="Q13506-1"/>
</dbReference>
<dbReference type="RefSeq" id="NP_001308241.1">
    <molecule id="Q13506-1"/>
    <property type="nucleotide sequence ID" value="NM_001321312.2"/>
</dbReference>
<dbReference type="RefSeq" id="NP_001308242.1">
    <molecule id="Q13506-1"/>
    <property type="nucleotide sequence ID" value="NM_001321313.1"/>
</dbReference>
<dbReference type="RefSeq" id="NP_001308243.1">
    <property type="nucleotide sequence ID" value="NM_001321314.1"/>
</dbReference>
<dbReference type="RefSeq" id="NP_001308244.1">
    <property type="nucleotide sequence ID" value="NM_001321315.1"/>
</dbReference>
<dbReference type="RefSeq" id="NP_005957.2">
    <molecule id="Q13506-1"/>
    <property type="nucleotide sequence ID" value="NM_005966.3"/>
</dbReference>
<dbReference type="RefSeq" id="XP_005246639.1">
    <molecule id="Q13506-1"/>
    <property type="nucleotide sequence ID" value="XM_005246582.2"/>
</dbReference>
<dbReference type="RefSeq" id="XP_005246640.1">
    <molecule id="Q13506-1"/>
    <property type="nucleotide sequence ID" value="XM_005246583.2"/>
</dbReference>
<dbReference type="RefSeq" id="XP_011509521.1">
    <molecule id="Q13506-1"/>
    <property type="nucleotide sequence ID" value="XM_011511219.4"/>
</dbReference>
<dbReference type="RefSeq" id="XP_016859659.1">
    <molecule id="Q13506-1"/>
    <property type="nucleotide sequence ID" value="XM_017004170.2"/>
</dbReference>
<dbReference type="RefSeq" id="XP_016859665.1">
    <molecule id="Q13506-1"/>
    <property type="nucleotide sequence ID" value="XM_017004176.2"/>
</dbReference>
<dbReference type="RefSeq" id="XP_024308685.1">
    <molecule id="Q13506-1"/>
    <property type="nucleotide sequence ID" value="XM_024452917.2"/>
</dbReference>
<dbReference type="RefSeq" id="XP_047300398.1">
    <molecule id="Q13506-1"/>
    <property type="nucleotide sequence ID" value="XM_047444442.1"/>
</dbReference>
<dbReference type="RefSeq" id="XP_047300399.1">
    <molecule id="Q13506-1"/>
    <property type="nucleotide sequence ID" value="XM_047444443.1"/>
</dbReference>
<dbReference type="RefSeq" id="XP_047300400.1">
    <molecule id="Q13506-1"/>
    <property type="nucleotide sequence ID" value="XM_047444444.1"/>
</dbReference>
<dbReference type="RefSeq" id="XP_047300401.1">
    <molecule id="Q13506-1"/>
    <property type="nucleotide sequence ID" value="XM_047444445.1"/>
</dbReference>
<dbReference type="RefSeq" id="XP_047300402.1">
    <molecule id="Q13506-1"/>
    <property type="nucleotide sequence ID" value="XM_047444446.1"/>
</dbReference>
<dbReference type="RefSeq" id="XP_047300403.1">
    <molecule id="Q13506-1"/>
    <property type="nucleotide sequence ID" value="XM_047444447.1"/>
</dbReference>
<dbReference type="RefSeq" id="XP_047300404.1">
    <molecule id="Q13506-1"/>
    <property type="nucleotide sequence ID" value="XM_047444448.1"/>
</dbReference>
<dbReference type="RefSeq" id="XP_047300405.1">
    <molecule id="Q13506-1"/>
    <property type="nucleotide sequence ID" value="XM_047444449.1"/>
</dbReference>
<dbReference type="RefSeq" id="XP_047300406.1">
    <molecule id="Q13506-1"/>
    <property type="nucleotide sequence ID" value="XM_047444450.1"/>
</dbReference>
<dbReference type="RefSeq" id="XP_047300407.1">
    <molecule id="Q13506-1"/>
    <property type="nucleotide sequence ID" value="XM_047444451.1"/>
</dbReference>
<dbReference type="RefSeq" id="XP_047300408.1">
    <molecule id="Q13506-1"/>
    <property type="nucleotide sequence ID" value="XM_047444452.1"/>
</dbReference>
<dbReference type="RefSeq" id="XP_047300409.1">
    <molecule id="Q13506-1"/>
    <property type="nucleotide sequence ID" value="XM_047444453.1"/>
</dbReference>
<dbReference type="RefSeq" id="XP_047300410.1">
    <molecule id="Q13506-1"/>
    <property type="nucleotide sequence ID" value="XM_047444454.1"/>
</dbReference>
<dbReference type="RefSeq" id="XP_047300412.1">
    <molecule id="Q13506-1"/>
    <property type="nucleotide sequence ID" value="XM_047444456.1"/>
</dbReference>
<dbReference type="RefSeq" id="XP_054198145.1">
    <molecule id="Q13506-1"/>
    <property type="nucleotide sequence ID" value="XM_054342170.1"/>
</dbReference>
<dbReference type="RefSeq" id="XP_054198146.1">
    <molecule id="Q13506-1"/>
    <property type="nucleotide sequence ID" value="XM_054342171.1"/>
</dbReference>
<dbReference type="RefSeq" id="XP_054198147.1">
    <molecule id="Q13506-1"/>
    <property type="nucleotide sequence ID" value="XM_054342172.1"/>
</dbReference>
<dbReference type="RefSeq" id="XP_054198148.1">
    <molecule id="Q13506-1"/>
    <property type="nucleotide sequence ID" value="XM_054342173.1"/>
</dbReference>
<dbReference type="RefSeq" id="XP_054198149.1">
    <molecule id="Q13506-1"/>
    <property type="nucleotide sequence ID" value="XM_054342174.1"/>
</dbReference>
<dbReference type="RefSeq" id="XP_054198150.1">
    <molecule id="Q13506-1"/>
    <property type="nucleotide sequence ID" value="XM_054342175.1"/>
</dbReference>
<dbReference type="RefSeq" id="XP_054198151.1">
    <molecule id="Q13506-1"/>
    <property type="nucleotide sequence ID" value="XM_054342176.1"/>
</dbReference>
<dbReference type="RefSeq" id="XP_054198152.1">
    <molecule id="Q13506-1"/>
    <property type="nucleotide sequence ID" value="XM_054342177.1"/>
</dbReference>
<dbReference type="RefSeq" id="XP_054198153.1">
    <molecule id="Q13506-1"/>
    <property type="nucleotide sequence ID" value="XM_054342178.1"/>
</dbReference>
<dbReference type="RefSeq" id="XP_054198154.1">
    <molecule id="Q13506-1"/>
    <property type="nucleotide sequence ID" value="XM_054342179.1"/>
</dbReference>
<dbReference type="RefSeq" id="XP_054198155.1">
    <molecule id="Q13506-1"/>
    <property type="nucleotide sequence ID" value="XM_054342180.1"/>
</dbReference>
<dbReference type="RefSeq" id="XP_054198156.1">
    <molecule id="Q13506-1"/>
    <property type="nucleotide sequence ID" value="XM_054342181.1"/>
</dbReference>
<dbReference type="RefSeq" id="XP_054198157.1">
    <molecule id="Q13506-1"/>
    <property type="nucleotide sequence ID" value="XM_054342182.1"/>
</dbReference>
<dbReference type="RefSeq" id="XP_054198158.1">
    <molecule id="Q13506-1"/>
    <property type="nucleotide sequence ID" value="XM_054342183.1"/>
</dbReference>
<dbReference type="RefSeq" id="XP_054198159.1">
    <molecule id="Q13506-1"/>
    <property type="nucleotide sequence ID" value="XM_054342184.1"/>
</dbReference>
<dbReference type="RefSeq" id="XP_054198160.1">
    <molecule id="Q13506-1"/>
    <property type="nucleotide sequence ID" value="XM_054342185.1"/>
</dbReference>
<dbReference type="RefSeq" id="XP_054198161.1">
    <molecule id="Q13506-1"/>
    <property type="nucleotide sequence ID" value="XM_054342186.1"/>
</dbReference>
<dbReference type="RefSeq" id="XP_054198162.1">
    <molecule id="Q13506-1"/>
    <property type="nucleotide sequence ID" value="XM_054342187.1"/>
</dbReference>
<dbReference type="RefSeq" id="XP_054198163.1">
    <molecule id="Q13506-1"/>
    <property type="nucleotide sequence ID" value="XM_054342188.1"/>
</dbReference>
<dbReference type="PDB" id="2YUF">
    <property type="method" value="NMR"/>
    <property type="chains" value="A=189-317"/>
</dbReference>
<dbReference type="PDBsum" id="2YUF"/>
<dbReference type="SMR" id="Q13506"/>
<dbReference type="BioGRID" id="110746">
    <property type="interactions" value="30"/>
</dbReference>
<dbReference type="FunCoup" id="Q13506">
    <property type="interactions" value="2642"/>
</dbReference>
<dbReference type="IntAct" id="Q13506">
    <property type="interactions" value="13"/>
</dbReference>
<dbReference type="STRING" id="9606.ENSP00000336894"/>
<dbReference type="GlyGen" id="Q13506">
    <property type="glycosylation" value="3 sites, 1 O-linked glycan (3 sites)"/>
</dbReference>
<dbReference type="iPTMnet" id="Q13506"/>
<dbReference type="PhosphoSitePlus" id="Q13506"/>
<dbReference type="BioMuta" id="NAB1"/>
<dbReference type="DMDM" id="90109928"/>
<dbReference type="jPOST" id="Q13506"/>
<dbReference type="MassIVE" id="Q13506"/>
<dbReference type="PaxDb" id="9606-ENSP00000336894"/>
<dbReference type="PeptideAtlas" id="Q13506"/>
<dbReference type="ProteomicsDB" id="59502">
    <molecule id="Q13506-1"/>
</dbReference>
<dbReference type="ProteomicsDB" id="59503">
    <molecule id="Q13506-2"/>
</dbReference>
<dbReference type="Pumba" id="Q13506"/>
<dbReference type="Antibodypedia" id="1209">
    <property type="antibodies" value="336 antibodies from 28 providers"/>
</dbReference>
<dbReference type="DNASU" id="4664"/>
<dbReference type="Ensembl" id="ENST00000337386.10">
    <molecule id="Q13506-1"/>
    <property type="protein sequence ID" value="ENSP00000336894.5"/>
    <property type="gene ID" value="ENSG00000138386.17"/>
</dbReference>
<dbReference type="Ensembl" id="ENST00000409581.5">
    <molecule id="Q13506-1"/>
    <property type="protein sequence ID" value="ENSP00000387089.1"/>
    <property type="gene ID" value="ENSG00000138386.17"/>
</dbReference>
<dbReference type="GeneID" id="4664"/>
<dbReference type="KEGG" id="hsa:4664"/>
<dbReference type="MANE-Select" id="ENST00000337386.10">
    <property type="protein sequence ID" value="ENSP00000336894.5"/>
    <property type="RefSeq nucleotide sequence ID" value="NM_005966.4"/>
    <property type="RefSeq protein sequence ID" value="NP_005957.2"/>
</dbReference>
<dbReference type="UCSC" id="uc002usb.4">
    <molecule id="Q13506-1"/>
    <property type="organism name" value="human"/>
</dbReference>
<dbReference type="AGR" id="HGNC:7626"/>
<dbReference type="CTD" id="4664"/>
<dbReference type="DisGeNET" id="4664"/>
<dbReference type="GeneCards" id="NAB1"/>
<dbReference type="HGNC" id="HGNC:7626">
    <property type="gene designation" value="NAB1"/>
</dbReference>
<dbReference type="HPA" id="ENSG00000138386">
    <property type="expression patterns" value="Low tissue specificity"/>
</dbReference>
<dbReference type="MIM" id="600800">
    <property type="type" value="gene"/>
</dbReference>
<dbReference type="neXtProt" id="NX_Q13506"/>
<dbReference type="OpenTargets" id="ENSG00000138386"/>
<dbReference type="PharmGKB" id="PA31431"/>
<dbReference type="VEuPathDB" id="HostDB:ENSG00000138386"/>
<dbReference type="eggNOG" id="KOG3835">
    <property type="taxonomic scope" value="Eukaryota"/>
</dbReference>
<dbReference type="GeneTree" id="ENSGT00390000006330"/>
<dbReference type="HOGENOM" id="CLU_561344_0_0_1"/>
<dbReference type="InParanoid" id="Q13506"/>
<dbReference type="OMA" id="LCMRDTA"/>
<dbReference type="OrthoDB" id="10028556at2759"/>
<dbReference type="PAN-GO" id="Q13506">
    <property type="GO annotations" value="4 GO annotations based on evolutionary models"/>
</dbReference>
<dbReference type="PhylomeDB" id="Q13506"/>
<dbReference type="TreeFam" id="TF315501"/>
<dbReference type="PathwayCommons" id="Q13506"/>
<dbReference type="Reactome" id="R-HSA-9031628">
    <property type="pathway name" value="NGF-stimulated transcription"/>
</dbReference>
<dbReference type="Reactome" id="R-HSA-9619665">
    <property type="pathway name" value="EGR2 and SOX10-mediated initiation of Schwann cell myelination"/>
</dbReference>
<dbReference type="SignaLink" id="Q13506"/>
<dbReference type="BioGRID-ORCS" id="4664">
    <property type="hits" value="13 hits in 1156 CRISPR screens"/>
</dbReference>
<dbReference type="ChiTaRS" id="NAB1">
    <property type="organism name" value="human"/>
</dbReference>
<dbReference type="EvolutionaryTrace" id="Q13506"/>
<dbReference type="GeneWiki" id="NAB1"/>
<dbReference type="GenomeRNAi" id="4664"/>
<dbReference type="Pharos" id="Q13506">
    <property type="development level" value="Tbio"/>
</dbReference>
<dbReference type="PRO" id="PR:Q13506"/>
<dbReference type="Proteomes" id="UP000005640">
    <property type="component" value="Chromosome 2"/>
</dbReference>
<dbReference type="RNAct" id="Q13506">
    <property type="molecule type" value="protein"/>
</dbReference>
<dbReference type="Bgee" id="ENSG00000138386">
    <property type="expression patterns" value="Expressed in ganglionic eminence and 209 other cell types or tissues"/>
</dbReference>
<dbReference type="ExpressionAtlas" id="Q13506">
    <property type="expression patterns" value="baseline and differential"/>
</dbReference>
<dbReference type="GO" id="GO:0005654">
    <property type="term" value="C:nucleoplasm"/>
    <property type="evidence" value="ECO:0000304"/>
    <property type="project" value="Reactome"/>
</dbReference>
<dbReference type="GO" id="GO:0005634">
    <property type="term" value="C:nucleus"/>
    <property type="evidence" value="ECO:0000318"/>
    <property type="project" value="GO_Central"/>
</dbReference>
<dbReference type="GO" id="GO:0003712">
    <property type="term" value="F:transcription coregulator activity"/>
    <property type="evidence" value="ECO:0000318"/>
    <property type="project" value="GO_Central"/>
</dbReference>
<dbReference type="GO" id="GO:0001958">
    <property type="term" value="P:endochondral ossification"/>
    <property type="evidence" value="ECO:0007669"/>
    <property type="project" value="Ensembl"/>
</dbReference>
<dbReference type="GO" id="GO:0042552">
    <property type="term" value="P:myelination"/>
    <property type="evidence" value="ECO:0007669"/>
    <property type="project" value="Ensembl"/>
</dbReference>
<dbReference type="GO" id="GO:0045892">
    <property type="term" value="P:negative regulation of DNA-templated transcription"/>
    <property type="evidence" value="ECO:0000303"/>
    <property type="project" value="UniProtKB"/>
</dbReference>
<dbReference type="GO" id="GO:0006355">
    <property type="term" value="P:regulation of DNA-templated transcription"/>
    <property type="evidence" value="ECO:0000318"/>
    <property type="project" value="GO_Central"/>
</dbReference>
<dbReference type="GO" id="GO:0045682">
    <property type="term" value="P:regulation of epidermis development"/>
    <property type="evidence" value="ECO:0007669"/>
    <property type="project" value="Ensembl"/>
</dbReference>
<dbReference type="GO" id="GO:0014037">
    <property type="term" value="P:Schwann cell differentiation"/>
    <property type="evidence" value="ECO:0007669"/>
    <property type="project" value="Ensembl"/>
</dbReference>
<dbReference type="FunFam" id="1.20.120.2010:FF:000001">
    <property type="entry name" value="NGFI-A-binding protein 1 isoform X1"/>
    <property type="match status" value="1"/>
</dbReference>
<dbReference type="Gene3D" id="1.20.120.2010">
    <property type="entry name" value="NAB conserved domain 2"/>
    <property type="match status" value="1"/>
</dbReference>
<dbReference type="InterPro" id="IPR006986">
    <property type="entry name" value="Nab1_C"/>
</dbReference>
<dbReference type="InterPro" id="IPR006989">
    <property type="entry name" value="NAB_co-repressor_dom"/>
</dbReference>
<dbReference type="InterPro" id="IPR039040">
    <property type="entry name" value="NAB_fam"/>
</dbReference>
<dbReference type="InterPro" id="IPR006988">
    <property type="entry name" value="Nab_N"/>
</dbReference>
<dbReference type="InterPro" id="IPR038398">
    <property type="entry name" value="NCD2_sf"/>
</dbReference>
<dbReference type="PANTHER" id="PTHR12623">
    <property type="entry name" value="NGFI-A BINDING PROTEIN"/>
    <property type="match status" value="1"/>
</dbReference>
<dbReference type="PANTHER" id="PTHR12623:SF9">
    <property type="entry name" value="NGFI-A-BINDING PROTEIN 1"/>
    <property type="match status" value="1"/>
</dbReference>
<dbReference type="Pfam" id="PF04902">
    <property type="entry name" value="Nab1"/>
    <property type="match status" value="1"/>
</dbReference>
<dbReference type="Pfam" id="PF04905">
    <property type="entry name" value="NCD2"/>
    <property type="match status" value="1"/>
</dbReference>
<dbReference type="Pfam" id="PF04904">
    <property type="entry name" value="SAM_NCD1"/>
    <property type="match status" value="1"/>
</dbReference>